<sequence>MRQHSRMAVAALAAGANAASFTDVCTVSNVKAALPANGTLLGISMLPSAVTANPLYNQSAGMGSTTTYDYCNVTVAYTHTGKGDKVVIKYAFPKPSDYENRFYVAGGGGFSLSSDATGGLAYGAVGGATDAGYDAFDNSYDEVVLYGNGTINWDATYMFAYQALGEMTRIGKYITKGFYGQSSDSKVYTYYEGCSDGGREGMSQVQRWGEEYDGAITGAPAFRFAQQQVHHVFSSEVEQTLDYYPPPCELKKIVNATIAACDPLDGRTDGVVSRTDLCKLNFNLTSIIGEPYYCAAGTSTSLGFGFSNGKRSNVKRQAEGSTTSYQPAQNGTVTARGVAVAQAIYDGLHNSKGERAYLSWQIASELSDAETEYNSDTGKWELNIPSTGGEYVTKFIQLLNLDNLSDLNNVTYDTLVDWMNTGMVRYMDSLQTTLPDLTPFQSSGGKLLHYHGESDPSIPAASSVHYWQAVRSVMYGDKTEEEALEALEDWYQFYLIPGAAHCGTNSLQPGPYPENNMEIMIDWVENGNKPSRLNATVSSGTYAGETQMLCQWPKRPLWRGNSSFDCVNDEKSIDSWTYEFPAFKVPVY</sequence>
<evidence type="ECO:0000250" key="1">
    <source>
        <dbReference type="UniProtKB" id="Q2UP89"/>
    </source>
</evidence>
<evidence type="ECO:0000269" key="2">
    <source>
    </source>
</evidence>
<evidence type="ECO:0000305" key="3"/>
<organism>
    <name type="scientific">Aspergillus oryzae (strain ATCC 42149 / RIB 40)</name>
    <name type="common">Yellow koji mold</name>
    <dbReference type="NCBI Taxonomy" id="510516"/>
    <lineage>
        <taxon>Eukaryota</taxon>
        <taxon>Fungi</taxon>
        <taxon>Dikarya</taxon>
        <taxon>Ascomycota</taxon>
        <taxon>Pezizomycotina</taxon>
        <taxon>Eurotiomycetes</taxon>
        <taxon>Eurotiomycetidae</taxon>
        <taxon>Eurotiales</taxon>
        <taxon>Aspergillaceae</taxon>
        <taxon>Aspergillus</taxon>
        <taxon>Aspergillus subgen. Circumdati</taxon>
    </lineage>
</organism>
<feature type="signal peptide" evidence="2">
    <location>
        <begin position="1"/>
        <end position="18"/>
    </location>
</feature>
<feature type="chain" id="PRO_0000033587" description="Tannase 33 kDa subunit">
    <location>
        <begin position="19"/>
        <end position="316"/>
    </location>
</feature>
<feature type="chain" id="PRO_0000033588" description="Tannase 30 kDa subunit">
    <location>
        <begin position="317"/>
        <end position="588"/>
    </location>
</feature>
<feature type="active site" description="Acyl-ester intermediate" evidence="1">
    <location>
        <position position="195"/>
    </location>
</feature>
<feature type="active site" description="Charge relay system" evidence="1">
    <location>
        <position position="455"/>
    </location>
</feature>
<feature type="active site" description="Charge relay system" evidence="1">
    <location>
        <position position="501"/>
    </location>
</feature>
<feature type="binding site" evidence="1">
    <location>
        <position position="262"/>
    </location>
    <ligand>
        <name>Ca(2+)</name>
        <dbReference type="ChEBI" id="CHEBI:29108"/>
    </ligand>
</feature>
<feature type="binding site" evidence="1">
    <location>
        <position position="265"/>
    </location>
    <ligand>
        <name>Ca(2+)</name>
        <dbReference type="ChEBI" id="CHEBI:29108"/>
    </ligand>
</feature>
<feature type="binding site" evidence="1">
    <location>
        <position position="269"/>
    </location>
    <ligand>
        <name>Ca(2+)</name>
        <dbReference type="ChEBI" id="CHEBI:29108"/>
    </ligand>
</feature>
<feature type="binding site" evidence="1">
    <location>
        <position position="271"/>
    </location>
    <ligand>
        <name>Ca(2+)</name>
        <dbReference type="ChEBI" id="CHEBI:29108"/>
    </ligand>
</feature>
<feature type="site" description="Cleavage">
    <location>
        <begin position="316"/>
        <end position="317"/>
    </location>
</feature>
<feature type="modified residue" description="Pyrrolidone carboxylic acid" evidence="2">
    <location>
        <position position="317"/>
    </location>
</feature>
<feature type="disulfide bond" evidence="1">
    <location>
        <begin position="25"/>
        <end position="71"/>
    </location>
</feature>
<feature type="disulfide bond" evidence="1">
    <location>
        <begin position="194"/>
        <end position="502"/>
    </location>
</feature>
<feature type="disulfide bond" evidence="1">
    <location>
        <begin position="261"/>
        <end position="278"/>
    </location>
</feature>
<proteinExistence type="evidence at protein level"/>
<dbReference type="EC" id="3.1.1.20"/>
<dbReference type="EMBL" id="D63338">
    <property type="protein sequence ID" value="BAA09656.1"/>
    <property type="molecule type" value="Genomic_DNA"/>
</dbReference>
<dbReference type="EMBL" id="BA000056">
    <property type="protein sequence ID" value="BAE65552.1"/>
    <property type="molecule type" value="Genomic_DNA"/>
</dbReference>
<dbReference type="PIR" id="JC5087">
    <property type="entry name" value="JC5087"/>
</dbReference>
<dbReference type="RefSeq" id="XP_001826685.1">
    <property type="nucleotide sequence ID" value="XM_001826633.1"/>
</dbReference>
<dbReference type="SMR" id="P78581"/>
<dbReference type="STRING" id="510516.P78581"/>
<dbReference type="ESTHER" id="aspor-tan">
    <property type="family name" value="Tannase"/>
</dbReference>
<dbReference type="EnsemblFungi" id="BAE65552">
    <property type="protein sequence ID" value="BAE65552"/>
    <property type="gene ID" value="AO090103000074"/>
</dbReference>
<dbReference type="GeneID" id="5998807"/>
<dbReference type="KEGG" id="aor:AO090103000074"/>
<dbReference type="VEuPathDB" id="FungiDB:AO090103000074"/>
<dbReference type="HOGENOM" id="CLU_014819_2_1_1"/>
<dbReference type="OMA" id="LCQWPSR"/>
<dbReference type="OrthoDB" id="85565at5052"/>
<dbReference type="BioCyc" id="MetaCyc:MONOMER-16449"/>
<dbReference type="BRENDA" id="3.1.1.20">
    <property type="organism ID" value="522"/>
</dbReference>
<dbReference type="SABIO-RK" id="P78581"/>
<dbReference type="Proteomes" id="UP000006564">
    <property type="component" value="Chromosome 8"/>
</dbReference>
<dbReference type="GO" id="GO:0030600">
    <property type="term" value="F:feruloyl esterase activity"/>
    <property type="evidence" value="ECO:0007669"/>
    <property type="project" value="UniProtKB-ARBA"/>
</dbReference>
<dbReference type="GO" id="GO:0046872">
    <property type="term" value="F:metal ion binding"/>
    <property type="evidence" value="ECO:0007669"/>
    <property type="project" value="UniProtKB-KW"/>
</dbReference>
<dbReference type="GO" id="GO:0050318">
    <property type="term" value="F:tannase activity"/>
    <property type="evidence" value="ECO:0007669"/>
    <property type="project" value="UniProtKB-EC"/>
</dbReference>
<dbReference type="InterPro" id="IPR029058">
    <property type="entry name" value="AB_hydrolase_fold"/>
</dbReference>
<dbReference type="InterPro" id="IPR011118">
    <property type="entry name" value="Tannase/feruloyl_esterase"/>
</dbReference>
<dbReference type="PANTHER" id="PTHR33938:SF7">
    <property type="entry name" value="CARBOXYLIC ESTER HYDROLASE"/>
    <property type="match status" value="1"/>
</dbReference>
<dbReference type="PANTHER" id="PTHR33938">
    <property type="entry name" value="FERULOYL ESTERASE B-RELATED"/>
    <property type="match status" value="1"/>
</dbReference>
<dbReference type="Pfam" id="PF07519">
    <property type="entry name" value="Tannase"/>
    <property type="match status" value="1"/>
</dbReference>
<dbReference type="SUPFAM" id="SSF53474">
    <property type="entry name" value="alpha/beta-Hydrolases"/>
    <property type="match status" value="1"/>
</dbReference>
<gene>
    <name type="ORF">AO090103000074</name>
</gene>
<name>TAN_ASPOR</name>
<accession>P78581</accession>
<accession>Q2TYX1</accession>
<reference key="1">
    <citation type="journal article" date="1996" name="Gene">
        <title>Cloning and sequencing of the gene encoding tannase and a structural study of the tannase subunit from Aspergillus oryzae.</title>
        <authorList>
            <person name="Hatamoto O."/>
            <person name="Watarai T."/>
            <person name="Kikuchi M."/>
            <person name="Mizusawa K."/>
            <person name="Sekine H."/>
        </authorList>
    </citation>
    <scope>NUCLEOTIDE SEQUENCE [GENOMIC DNA]</scope>
    <scope>PROTEIN SEQUENCE OF 19-43; 159-166; 317-327; 424-426 AND 456-471</scope>
    <scope>PYROGLUTAMATE FORMATION AT GLN-317</scope>
    <source>
        <strain>TH</strain>
    </source>
</reference>
<reference key="2">
    <citation type="journal article" date="2005" name="Nature">
        <title>Genome sequencing and analysis of Aspergillus oryzae.</title>
        <authorList>
            <person name="Machida M."/>
            <person name="Asai K."/>
            <person name="Sano M."/>
            <person name="Tanaka T."/>
            <person name="Kumagai T."/>
            <person name="Terai G."/>
            <person name="Kusumoto K."/>
            <person name="Arima T."/>
            <person name="Akita O."/>
            <person name="Kashiwagi Y."/>
            <person name="Abe K."/>
            <person name="Gomi K."/>
            <person name="Horiuchi H."/>
            <person name="Kitamoto K."/>
            <person name="Kobayashi T."/>
            <person name="Takeuchi M."/>
            <person name="Denning D.W."/>
            <person name="Galagan J.E."/>
            <person name="Nierman W.C."/>
            <person name="Yu J."/>
            <person name="Archer D.B."/>
            <person name="Bennett J.W."/>
            <person name="Bhatnagar D."/>
            <person name="Cleveland T.E."/>
            <person name="Fedorova N.D."/>
            <person name="Gotoh O."/>
            <person name="Horikawa H."/>
            <person name="Hosoyama A."/>
            <person name="Ichinomiya M."/>
            <person name="Igarashi R."/>
            <person name="Iwashita K."/>
            <person name="Juvvadi P.R."/>
            <person name="Kato M."/>
            <person name="Kato Y."/>
            <person name="Kin T."/>
            <person name="Kokubun A."/>
            <person name="Maeda H."/>
            <person name="Maeyama N."/>
            <person name="Maruyama J."/>
            <person name="Nagasaki H."/>
            <person name="Nakajima T."/>
            <person name="Oda K."/>
            <person name="Okada K."/>
            <person name="Paulsen I."/>
            <person name="Sakamoto K."/>
            <person name="Sawano T."/>
            <person name="Takahashi M."/>
            <person name="Takase K."/>
            <person name="Terabayashi Y."/>
            <person name="Wortman J.R."/>
            <person name="Yamada O."/>
            <person name="Yamagata Y."/>
            <person name="Anazawa H."/>
            <person name="Hata Y."/>
            <person name="Koide Y."/>
            <person name="Komori T."/>
            <person name="Koyama Y."/>
            <person name="Minetoki T."/>
            <person name="Suharnan S."/>
            <person name="Tanaka A."/>
            <person name="Isono K."/>
            <person name="Kuhara S."/>
            <person name="Ogasawara N."/>
            <person name="Kikuchi H."/>
        </authorList>
    </citation>
    <scope>NUCLEOTIDE SEQUENCE [LARGE SCALE GENOMIC DNA]</scope>
    <source>
        <strain>ATCC 42149 / RIB 40</strain>
    </source>
</reference>
<comment type="function">
    <text>Hydrolyzes ester bonds of tannic acid to produce gallic acid and glucose.</text>
</comment>
<comment type="catalytic activity">
    <reaction>
        <text>digallate + H2O = 2 3,4,5-trihydroxybenzoate + H(+)</text>
        <dbReference type="Rhea" id="RHEA:16365"/>
        <dbReference type="ChEBI" id="CHEBI:15377"/>
        <dbReference type="ChEBI" id="CHEBI:15378"/>
        <dbReference type="ChEBI" id="CHEBI:16918"/>
        <dbReference type="ChEBI" id="CHEBI:17866"/>
        <dbReference type="EC" id="3.1.1.20"/>
    </reaction>
</comment>
<comment type="subunit">
    <text>Heterooctamer of 4 33 kDa and 4 30 kDa subunits linked by disulfide bond(s).</text>
</comment>
<comment type="PTM">
    <text>The protein is glycosylated to a carbohydrate content of 22.7%.</text>
</comment>
<comment type="PTM">
    <text evidence="2">The N-terminus of the 30 kDa subunit is blocked.</text>
</comment>
<comment type="similarity">
    <text evidence="3">Belongs to the tannase family.</text>
</comment>
<keyword id="KW-0106">Calcium</keyword>
<keyword id="KW-0165">Cleavage on pair of basic residues</keyword>
<keyword id="KW-0903">Direct protein sequencing</keyword>
<keyword id="KW-1015">Disulfide bond</keyword>
<keyword id="KW-0325">Glycoprotein</keyword>
<keyword id="KW-0378">Hydrolase</keyword>
<keyword id="KW-0479">Metal-binding</keyword>
<keyword id="KW-0873">Pyrrolidone carboxylic acid</keyword>
<keyword id="KW-1185">Reference proteome</keyword>
<keyword id="KW-0719">Serine esterase</keyword>
<keyword id="KW-0732">Signal</keyword>
<protein>
    <recommendedName>
        <fullName>Tannase</fullName>
        <ecNumber>3.1.1.20</ecNumber>
    </recommendedName>
    <component>
        <recommendedName>
            <fullName>Tannase 33 kDa subunit</fullName>
        </recommendedName>
    </component>
    <component>
        <recommendedName>
            <fullName>Tannase 30 kDa subunit</fullName>
        </recommendedName>
    </component>
</protein>